<sequence length="612" mass="71732">MDKNTIIGFILIFWVLFGFAYLNHNRPIQEQLEKNPPMSANSVKKEFSNPISEIQSSDIYGNFAASTKGTETFVTIQNALMEIKLSTKGGRIYSVRLKKYTNYKNEPLYLFEGDESAFNIIFISSNNKVLNSEDFYFEIVSNSELETILRLNAGKNRYIDFVYTLHPDDYMVDWKLVSHNIQTELSHSMHTLNIQWMQKIRQQEKGRKFEERYARLTYKFLTDDIEQLRETKDDVRNVPNKLKWIGYKDQFFSSVFIVHSNFESAKLDSKYLTYGAYIKEYSTSTSIPYNIANIEPIKFNFYFGPNDYSLLKSYDKTKLKEQNLELEKLVPLGWSLFRAINKCLIIPIFNWLTNGENVNLGLAILILTLIIKIALFPLTYKSFISSAKMRVLKPQVENINIKYSGQEKALIRQQKTMELYRQVGVNPMTGCFPILLQMPFLIALFMFFPSAIGLRHQSFLWANDLSTYDTLIQWSTDIPFIPRFLGNHISLFCLLMSLATILNTRYNTMYQQNIGQEQFPGMKLTMYFMPVVMFFFLNSYPAGLNYYYLISTLITIMQTIIFRGLVNELNLLAKLEANKKKSKLVKKKFGFMDRLEEFQRKQQELLKKKRKR</sequence>
<feature type="chain" id="PRO_1000187629" description="Membrane protein insertase YidC">
    <location>
        <begin position="1"/>
        <end position="612"/>
    </location>
</feature>
<feature type="transmembrane region" description="Helical" evidence="1">
    <location>
        <begin position="4"/>
        <end position="24"/>
    </location>
</feature>
<feature type="transmembrane region" description="Helical" evidence="1">
    <location>
        <begin position="329"/>
        <end position="349"/>
    </location>
</feature>
<feature type="transmembrane region" description="Helical" evidence="1">
    <location>
        <begin position="358"/>
        <end position="378"/>
    </location>
</feature>
<feature type="transmembrane region" description="Helical" evidence="1">
    <location>
        <begin position="434"/>
        <end position="454"/>
    </location>
</feature>
<feature type="transmembrane region" description="Helical" evidence="1">
    <location>
        <begin position="484"/>
        <end position="504"/>
    </location>
</feature>
<feature type="transmembrane region" description="Helical" evidence="1">
    <location>
        <begin position="524"/>
        <end position="544"/>
    </location>
</feature>
<feature type="transmembrane region" description="Helical" evidence="1">
    <location>
        <begin position="546"/>
        <end position="566"/>
    </location>
</feature>
<reference key="1">
    <citation type="journal article" date="2008" name="Science">
        <title>Genome of an endosymbiont coupling N2 fixation to cellulolysis within RT protist cells in termite gut.</title>
        <authorList>
            <person name="Hongoh Y."/>
            <person name="Sharma V.K."/>
            <person name="Prakash T."/>
            <person name="Noda S."/>
            <person name="Toh H."/>
            <person name="Taylor T.D."/>
            <person name="Kudo T."/>
            <person name="Sakaki Y."/>
            <person name="Toyoda A."/>
            <person name="Hattori M."/>
            <person name="Ohkuma M."/>
        </authorList>
    </citation>
    <scope>NUCLEOTIDE SEQUENCE [LARGE SCALE GENOMIC DNA]</scope>
</reference>
<dbReference type="EMBL" id="AP010656">
    <property type="protein sequence ID" value="BAG83431.1"/>
    <property type="molecule type" value="Genomic_DNA"/>
</dbReference>
<dbReference type="RefSeq" id="WP_012573192.1">
    <property type="nucleotide sequence ID" value="NC_011565.1"/>
</dbReference>
<dbReference type="SMR" id="B6YQF9"/>
<dbReference type="STRING" id="511995.CFPG_168"/>
<dbReference type="KEGG" id="aps:CFPG_168"/>
<dbReference type="eggNOG" id="COG0706">
    <property type="taxonomic scope" value="Bacteria"/>
</dbReference>
<dbReference type="HOGENOM" id="CLU_016535_2_0_10"/>
<dbReference type="OrthoDB" id="9780552at2"/>
<dbReference type="Proteomes" id="UP000000723">
    <property type="component" value="Chromosome"/>
</dbReference>
<dbReference type="GO" id="GO:0005886">
    <property type="term" value="C:plasma membrane"/>
    <property type="evidence" value="ECO:0007669"/>
    <property type="project" value="UniProtKB-SubCell"/>
</dbReference>
<dbReference type="GO" id="GO:0032977">
    <property type="term" value="F:membrane insertase activity"/>
    <property type="evidence" value="ECO:0007669"/>
    <property type="project" value="InterPro"/>
</dbReference>
<dbReference type="GO" id="GO:0051205">
    <property type="term" value="P:protein insertion into membrane"/>
    <property type="evidence" value="ECO:0007669"/>
    <property type="project" value="TreeGrafter"/>
</dbReference>
<dbReference type="GO" id="GO:0015031">
    <property type="term" value="P:protein transport"/>
    <property type="evidence" value="ECO:0007669"/>
    <property type="project" value="UniProtKB-KW"/>
</dbReference>
<dbReference type="CDD" id="cd20070">
    <property type="entry name" value="5TM_YidC_Alb3"/>
    <property type="match status" value="1"/>
</dbReference>
<dbReference type="CDD" id="cd19961">
    <property type="entry name" value="EcYidC-like_peri"/>
    <property type="match status" value="1"/>
</dbReference>
<dbReference type="Gene3D" id="2.70.98.90">
    <property type="match status" value="1"/>
</dbReference>
<dbReference type="HAMAP" id="MF_01810">
    <property type="entry name" value="YidC_type1"/>
    <property type="match status" value="1"/>
</dbReference>
<dbReference type="InterPro" id="IPR019998">
    <property type="entry name" value="Membr_insert_YidC"/>
</dbReference>
<dbReference type="InterPro" id="IPR028053">
    <property type="entry name" value="Membr_insert_YidC_N"/>
</dbReference>
<dbReference type="InterPro" id="IPR001708">
    <property type="entry name" value="YidC/ALB3/OXA1/COX18"/>
</dbReference>
<dbReference type="InterPro" id="IPR028055">
    <property type="entry name" value="YidC/Oxa/ALB_C"/>
</dbReference>
<dbReference type="InterPro" id="IPR047196">
    <property type="entry name" value="YidC_ALB_C"/>
</dbReference>
<dbReference type="InterPro" id="IPR038221">
    <property type="entry name" value="YidC_periplasmic_sf"/>
</dbReference>
<dbReference type="NCBIfam" id="NF002356">
    <property type="entry name" value="PRK01318.2-3"/>
    <property type="match status" value="1"/>
</dbReference>
<dbReference type="NCBIfam" id="TIGR03593">
    <property type="entry name" value="yidC_nterm"/>
    <property type="match status" value="1"/>
</dbReference>
<dbReference type="NCBIfam" id="TIGR03592">
    <property type="entry name" value="yidC_oxa1_cterm"/>
    <property type="match status" value="1"/>
</dbReference>
<dbReference type="PANTHER" id="PTHR12428:SF65">
    <property type="entry name" value="CYTOCHROME C OXIDASE ASSEMBLY PROTEIN COX18, MITOCHONDRIAL"/>
    <property type="match status" value="1"/>
</dbReference>
<dbReference type="PANTHER" id="PTHR12428">
    <property type="entry name" value="OXA1"/>
    <property type="match status" value="1"/>
</dbReference>
<dbReference type="Pfam" id="PF02096">
    <property type="entry name" value="60KD_IMP"/>
    <property type="match status" value="1"/>
</dbReference>
<dbReference type="Pfam" id="PF14849">
    <property type="entry name" value="YidC_periplas"/>
    <property type="match status" value="1"/>
</dbReference>
<dbReference type="PRINTS" id="PR00701">
    <property type="entry name" value="60KDINNERMP"/>
</dbReference>
<protein>
    <recommendedName>
        <fullName evidence="1">Membrane protein insertase YidC</fullName>
    </recommendedName>
    <alternativeName>
        <fullName evidence="1">Foldase YidC</fullName>
    </alternativeName>
    <alternativeName>
        <fullName evidence="1">Membrane integrase YidC</fullName>
    </alternativeName>
    <alternativeName>
        <fullName evidence="1">Membrane protein YidC</fullName>
    </alternativeName>
</protein>
<proteinExistence type="inferred from homology"/>
<keyword id="KW-0997">Cell inner membrane</keyword>
<keyword id="KW-1003">Cell membrane</keyword>
<keyword id="KW-0143">Chaperone</keyword>
<keyword id="KW-0472">Membrane</keyword>
<keyword id="KW-0653">Protein transport</keyword>
<keyword id="KW-1185">Reference proteome</keyword>
<keyword id="KW-0812">Transmembrane</keyword>
<keyword id="KW-1133">Transmembrane helix</keyword>
<keyword id="KW-0813">Transport</keyword>
<organism>
    <name type="scientific">Azobacteroides pseudotrichonymphae genomovar. CFP2</name>
    <dbReference type="NCBI Taxonomy" id="511995"/>
    <lineage>
        <taxon>Bacteria</taxon>
        <taxon>Pseudomonadati</taxon>
        <taxon>Bacteroidota</taxon>
        <taxon>Bacteroidia</taxon>
        <taxon>Bacteroidales</taxon>
        <taxon>Candidatus Azobacteroides</taxon>
    </lineage>
</organism>
<accession>B6YQF9</accession>
<name>YIDC_AZOPC</name>
<comment type="function">
    <text evidence="1">Required for the insertion and/or proper folding and/or complex formation of integral membrane proteins into the membrane. Involved in integration of membrane proteins that insert both dependently and independently of the Sec translocase complex, as well as at least some lipoproteins. Aids folding of multispanning membrane proteins.</text>
</comment>
<comment type="subunit">
    <text evidence="1">Interacts with the Sec translocase complex via SecD. Specifically interacts with transmembrane segments of nascent integral membrane proteins during membrane integration.</text>
</comment>
<comment type="subcellular location">
    <subcellularLocation>
        <location evidence="1">Cell inner membrane</location>
        <topology evidence="1">Multi-pass membrane protein</topology>
    </subcellularLocation>
</comment>
<comment type="similarity">
    <text evidence="1">Belongs to the OXA1/ALB3/YidC family. Type 1 subfamily.</text>
</comment>
<gene>
    <name evidence="1" type="primary">yidC</name>
    <name type="ordered locus">CFPG_168</name>
</gene>
<evidence type="ECO:0000255" key="1">
    <source>
        <dbReference type="HAMAP-Rule" id="MF_01810"/>
    </source>
</evidence>